<evidence type="ECO:0000255" key="1">
    <source>
        <dbReference type="HAMAP-Rule" id="MF_00636"/>
    </source>
</evidence>
<reference key="1">
    <citation type="submission" date="2009-01" db="EMBL/GenBank/DDBJ databases">
        <title>Complete sequence of Diaphorobacter sp. TPSY.</title>
        <authorList>
            <consortium name="US DOE Joint Genome Institute"/>
            <person name="Lucas S."/>
            <person name="Copeland A."/>
            <person name="Lapidus A."/>
            <person name="Glavina del Rio T."/>
            <person name="Tice H."/>
            <person name="Bruce D."/>
            <person name="Goodwin L."/>
            <person name="Pitluck S."/>
            <person name="Chertkov O."/>
            <person name="Brettin T."/>
            <person name="Detter J.C."/>
            <person name="Han C."/>
            <person name="Larimer F."/>
            <person name="Land M."/>
            <person name="Hauser L."/>
            <person name="Kyrpides N."/>
            <person name="Mikhailova N."/>
            <person name="Coates J.D."/>
        </authorList>
    </citation>
    <scope>NUCLEOTIDE SEQUENCE [LARGE SCALE GENOMIC DNA]</scope>
    <source>
        <strain>TPSY</strain>
    </source>
</reference>
<comment type="function">
    <text evidence="1">Displays ATPase and GTPase activities.</text>
</comment>
<comment type="similarity">
    <text evidence="1">Belongs to the RapZ-like family.</text>
</comment>
<organism>
    <name type="scientific">Acidovorax ebreus (strain TPSY)</name>
    <name type="common">Diaphorobacter sp. (strain TPSY)</name>
    <dbReference type="NCBI Taxonomy" id="535289"/>
    <lineage>
        <taxon>Bacteria</taxon>
        <taxon>Pseudomonadati</taxon>
        <taxon>Pseudomonadota</taxon>
        <taxon>Betaproteobacteria</taxon>
        <taxon>Burkholderiales</taxon>
        <taxon>Comamonadaceae</taxon>
        <taxon>Diaphorobacter</taxon>
    </lineage>
</organism>
<sequence>MDLEVVVITGMSGSGKSVALHALEDAGYYCVDNLPPELLTSFVELEHAHHGHRVAVAMDVRSATALPLVPQQLAGLREQGVQVRQLFLDATNDVLVRRFSETRRRHPLSQAEMREGPRPLLHTMRLERELLAPLREQAHVIDTSTLRSSQLLSYVKDLLSVPPSRLTLVFQSFAFKRGISMDADYVFDVRMLPNPHYEPLLRALTGKDAPVIDYLRQQPEVALMLAHIGDFLDHWLDALAHNHRSYVTVAIGCTGGQHRSVYLVEQLAARFEGRWNTLRRHRELDGI</sequence>
<gene>
    <name type="ordered locus">Dtpsy_0831</name>
</gene>
<accession>B9ME55</accession>
<keyword id="KW-0067">ATP-binding</keyword>
<keyword id="KW-0342">GTP-binding</keyword>
<keyword id="KW-0547">Nucleotide-binding</keyword>
<keyword id="KW-1185">Reference proteome</keyword>
<protein>
    <recommendedName>
        <fullName evidence="1">Nucleotide-binding protein Dtpsy_0831</fullName>
    </recommendedName>
</protein>
<feature type="chain" id="PRO_0000383239" description="Nucleotide-binding protein Dtpsy_0831">
    <location>
        <begin position="1"/>
        <end position="287"/>
    </location>
</feature>
<feature type="binding site" evidence="1">
    <location>
        <begin position="10"/>
        <end position="17"/>
    </location>
    <ligand>
        <name>ATP</name>
        <dbReference type="ChEBI" id="CHEBI:30616"/>
    </ligand>
</feature>
<feature type="binding site" evidence="1">
    <location>
        <begin position="59"/>
        <end position="62"/>
    </location>
    <ligand>
        <name>GTP</name>
        <dbReference type="ChEBI" id="CHEBI:37565"/>
    </ligand>
</feature>
<name>Y831_ACIET</name>
<proteinExistence type="inferred from homology"/>
<dbReference type="EMBL" id="CP001392">
    <property type="protein sequence ID" value="ACM32309.1"/>
    <property type="molecule type" value="Genomic_DNA"/>
</dbReference>
<dbReference type="RefSeq" id="WP_012655801.1">
    <property type="nucleotide sequence ID" value="NC_011992.1"/>
</dbReference>
<dbReference type="SMR" id="B9ME55"/>
<dbReference type="KEGG" id="dia:Dtpsy_0831"/>
<dbReference type="eggNOG" id="COG1660">
    <property type="taxonomic scope" value="Bacteria"/>
</dbReference>
<dbReference type="HOGENOM" id="CLU_059558_1_1_4"/>
<dbReference type="Proteomes" id="UP000000450">
    <property type="component" value="Chromosome"/>
</dbReference>
<dbReference type="GO" id="GO:0005524">
    <property type="term" value="F:ATP binding"/>
    <property type="evidence" value="ECO:0007669"/>
    <property type="project" value="UniProtKB-UniRule"/>
</dbReference>
<dbReference type="GO" id="GO:0005525">
    <property type="term" value="F:GTP binding"/>
    <property type="evidence" value="ECO:0007669"/>
    <property type="project" value="UniProtKB-UniRule"/>
</dbReference>
<dbReference type="Gene3D" id="3.40.50.300">
    <property type="entry name" value="P-loop containing nucleotide triphosphate hydrolases"/>
    <property type="match status" value="1"/>
</dbReference>
<dbReference type="HAMAP" id="MF_00636">
    <property type="entry name" value="RapZ_like"/>
    <property type="match status" value="1"/>
</dbReference>
<dbReference type="InterPro" id="IPR027417">
    <property type="entry name" value="P-loop_NTPase"/>
</dbReference>
<dbReference type="InterPro" id="IPR005337">
    <property type="entry name" value="RapZ-like"/>
</dbReference>
<dbReference type="InterPro" id="IPR053930">
    <property type="entry name" value="RapZ-like_N"/>
</dbReference>
<dbReference type="InterPro" id="IPR053931">
    <property type="entry name" value="RapZ_C"/>
</dbReference>
<dbReference type="NCBIfam" id="NF003828">
    <property type="entry name" value="PRK05416.1"/>
    <property type="match status" value="1"/>
</dbReference>
<dbReference type="PANTHER" id="PTHR30448">
    <property type="entry name" value="RNASE ADAPTER PROTEIN RAPZ"/>
    <property type="match status" value="1"/>
</dbReference>
<dbReference type="PANTHER" id="PTHR30448:SF0">
    <property type="entry name" value="RNASE ADAPTER PROTEIN RAPZ"/>
    <property type="match status" value="1"/>
</dbReference>
<dbReference type="Pfam" id="PF22740">
    <property type="entry name" value="PapZ_C"/>
    <property type="match status" value="1"/>
</dbReference>
<dbReference type="Pfam" id="PF03668">
    <property type="entry name" value="RapZ-like_N"/>
    <property type="match status" value="1"/>
</dbReference>
<dbReference type="PIRSF" id="PIRSF005052">
    <property type="entry name" value="P-loopkin"/>
    <property type="match status" value="1"/>
</dbReference>
<dbReference type="SUPFAM" id="SSF52540">
    <property type="entry name" value="P-loop containing nucleoside triphosphate hydrolases"/>
    <property type="match status" value="1"/>
</dbReference>